<protein>
    <recommendedName>
        <fullName evidence="1">DNA-directed RNA polymerase subunit beta'</fullName>
        <shortName evidence="1">RNAP subunit beta'</shortName>
        <ecNumber evidence="1">2.7.7.6</ecNumber>
    </recommendedName>
    <alternativeName>
        <fullName evidence="1">RNA polymerase subunit beta'</fullName>
    </alternativeName>
    <alternativeName>
        <fullName evidence="1">Transcriptase subunit beta'</fullName>
    </alternativeName>
</protein>
<evidence type="ECO:0000255" key="1">
    <source>
        <dbReference type="HAMAP-Rule" id="MF_01322"/>
    </source>
</evidence>
<gene>
    <name evidence="1" type="primary">rpoC</name>
    <name type="ordered locus">H16_A3496</name>
</gene>
<organism>
    <name type="scientific">Cupriavidus necator (strain ATCC 17699 / DSM 428 / KCTC 22496 / NCIMB 10442 / H16 / Stanier 337)</name>
    <name type="common">Ralstonia eutropha</name>
    <dbReference type="NCBI Taxonomy" id="381666"/>
    <lineage>
        <taxon>Bacteria</taxon>
        <taxon>Pseudomonadati</taxon>
        <taxon>Pseudomonadota</taxon>
        <taxon>Betaproteobacteria</taxon>
        <taxon>Burkholderiales</taxon>
        <taxon>Burkholderiaceae</taxon>
        <taxon>Cupriavidus</taxon>
    </lineage>
</organism>
<keyword id="KW-0240">DNA-directed RNA polymerase</keyword>
<keyword id="KW-0460">Magnesium</keyword>
<keyword id="KW-0479">Metal-binding</keyword>
<keyword id="KW-0548">Nucleotidyltransferase</keyword>
<keyword id="KW-1185">Reference proteome</keyword>
<keyword id="KW-0804">Transcription</keyword>
<keyword id="KW-0808">Transferase</keyword>
<keyword id="KW-0862">Zinc</keyword>
<proteinExistence type="inferred from homology"/>
<comment type="function">
    <text evidence="1">DNA-dependent RNA polymerase catalyzes the transcription of DNA into RNA using the four ribonucleoside triphosphates as substrates.</text>
</comment>
<comment type="catalytic activity">
    <reaction evidence="1">
        <text>RNA(n) + a ribonucleoside 5'-triphosphate = RNA(n+1) + diphosphate</text>
        <dbReference type="Rhea" id="RHEA:21248"/>
        <dbReference type="Rhea" id="RHEA-COMP:14527"/>
        <dbReference type="Rhea" id="RHEA-COMP:17342"/>
        <dbReference type="ChEBI" id="CHEBI:33019"/>
        <dbReference type="ChEBI" id="CHEBI:61557"/>
        <dbReference type="ChEBI" id="CHEBI:140395"/>
        <dbReference type="EC" id="2.7.7.6"/>
    </reaction>
</comment>
<comment type="cofactor">
    <cofactor evidence="1">
        <name>Mg(2+)</name>
        <dbReference type="ChEBI" id="CHEBI:18420"/>
    </cofactor>
    <text evidence="1">Binds 1 Mg(2+) ion per subunit.</text>
</comment>
<comment type="cofactor">
    <cofactor evidence="1">
        <name>Zn(2+)</name>
        <dbReference type="ChEBI" id="CHEBI:29105"/>
    </cofactor>
    <text evidence="1">Binds 2 Zn(2+) ions per subunit.</text>
</comment>
<comment type="subunit">
    <text evidence="1">The RNAP catalytic core consists of 2 alpha, 1 beta, 1 beta' and 1 omega subunit. When a sigma factor is associated with the core the holoenzyme is formed, which can initiate transcription.</text>
</comment>
<comment type="similarity">
    <text evidence="1">Belongs to the RNA polymerase beta' chain family.</text>
</comment>
<sequence length="1415" mass="156036">MKALLDLFKQVQQEEQFDAIKIGLASPEKIRSWSYGEVKKPETINYRTFKPERDGLFCAKIFGPIKDYECLCGKYKRLKHRGVICEKCGVEVTLAKVRRERMGHIELAAPTAHIWFLKSLPSRLGMVLDMTLRDIERVLYFEAFVVIEPGMTPLKKSQIMSEDDYLAKCDEYGEGEFVAMMGAEGIRELLRGIDIEKQIEQIRAELQATGSEAKIKKFAKRLKVLEAFQRSGIKPEWMILEVLPVLPPELRPLVPLDGGRFATSDLNDLYRRVINRNNRLKRLLELKAPEIIVRNEKRMLQEAVDSLLDNGRRGKAMTGANKRPLKSLAEMIKGKGGRFRQNLLGKRVDYSGRSVIVVGPTLKLHQCGLPKLMALELFKPFIFHKLETMGIATTIKAAKKEVESQTPVVWDILEEVIREHPVMLNRAPTLHRLGIQAFEPVLIEGKAIQLHPLVCAAFNADFDGDQMAVHVPLSLEAQMEARTLMLASNNVLFPANGDPSIVPSQDVVLGLYYTTRDKINGRGEGMTFADISEVIRAYENKEVELASRVNVRITEYELVDKDAEGDARFAPKITLQATTVGRAILSEILPKGLPFSVLNKPLKKKEISRLINTAFRKCGLRETVIFADKLLQSGFRLATRAGISIAIDDMLVPPQKEKIIAEASAKVKEYDKQYMSGLVTDQERYNNVVDIWGAAGDQVGKAMMEQLQHEDVVDREGKTVKQESFNSIYMMADSGARGSAAQIRQLAGMRGLMAKPDGSIIETPITANFREGLNVLQYFISTHGARKGLADTALKTANSGYLTRRLVDVTQDLVVVEDDCGTSNGVAMKALVEGGEVIEALRDRILGRVTVADVVNPETQETAIEAGTLLDEDLVELIDNIGVDEVKVRTPLSCDTRYGLCGKCYGRDLGRGVLVNSGEAVGVIAAQSIGEPGTQLTMRTFHIGGAASRAAVASSVEAKATGTVRFTATMRYVTNAKGELIVISRSGEALITDDHGRERERHKIPYGATLLVQDGQAIKAGTQLATWDALTRPIVSEYTGTTKFENVEEGVTVAKQMDEVTGLSTLVVIDAKRRTAATKGIRPQVKLLDANGQEVKIPGTDHSVTIGFQVGALITVKDGQQVHVGEVLARIPTESQKTRDITGGLPRVAELFEARSPKDAAVLAEVTGTTSFGKDTKGKQRLVITDLDGNAHEFLIAKEKQVLVHDGQVVNKGEMIVEGPADPHDILRLKGIEELAHYIVDEVQDVYRLQGVKINDKHIEVIVRQMLRRVQIADVGDTKFIPGEQVERSELLDENDRVIAEGKRPATYENLLLGITKASLSTDSFISAASFQETTRVLTEAAIMGKTDDLRGLKENVIVGRLIPAGTGLAYHRARKAREASERERAQAIAEEEQSLFIEPAPVVQATTEGEGDNA</sequence>
<dbReference type="EC" id="2.7.7.6" evidence="1"/>
<dbReference type="EMBL" id="AM260479">
    <property type="protein sequence ID" value="CAJ94564.1"/>
    <property type="molecule type" value="Genomic_DNA"/>
</dbReference>
<dbReference type="RefSeq" id="WP_010810462.1">
    <property type="nucleotide sequence ID" value="NZ_CP039287.1"/>
</dbReference>
<dbReference type="SMR" id="Q0K607"/>
<dbReference type="STRING" id="381666.H16_A3496"/>
<dbReference type="KEGG" id="reh:H16_A3496"/>
<dbReference type="eggNOG" id="COG0086">
    <property type="taxonomic scope" value="Bacteria"/>
</dbReference>
<dbReference type="HOGENOM" id="CLU_000524_3_1_4"/>
<dbReference type="OrthoDB" id="9815296at2"/>
<dbReference type="Proteomes" id="UP000008210">
    <property type="component" value="Chromosome 1"/>
</dbReference>
<dbReference type="GO" id="GO:0000428">
    <property type="term" value="C:DNA-directed RNA polymerase complex"/>
    <property type="evidence" value="ECO:0007669"/>
    <property type="project" value="UniProtKB-KW"/>
</dbReference>
<dbReference type="GO" id="GO:0003677">
    <property type="term" value="F:DNA binding"/>
    <property type="evidence" value="ECO:0007669"/>
    <property type="project" value="UniProtKB-UniRule"/>
</dbReference>
<dbReference type="GO" id="GO:0003899">
    <property type="term" value="F:DNA-directed RNA polymerase activity"/>
    <property type="evidence" value="ECO:0007669"/>
    <property type="project" value="UniProtKB-UniRule"/>
</dbReference>
<dbReference type="GO" id="GO:0000287">
    <property type="term" value="F:magnesium ion binding"/>
    <property type="evidence" value="ECO:0007669"/>
    <property type="project" value="UniProtKB-UniRule"/>
</dbReference>
<dbReference type="GO" id="GO:0008270">
    <property type="term" value="F:zinc ion binding"/>
    <property type="evidence" value="ECO:0007669"/>
    <property type="project" value="UniProtKB-UniRule"/>
</dbReference>
<dbReference type="GO" id="GO:0006351">
    <property type="term" value="P:DNA-templated transcription"/>
    <property type="evidence" value="ECO:0007669"/>
    <property type="project" value="UniProtKB-UniRule"/>
</dbReference>
<dbReference type="CDD" id="cd02655">
    <property type="entry name" value="RNAP_beta'_C"/>
    <property type="match status" value="1"/>
</dbReference>
<dbReference type="CDD" id="cd01609">
    <property type="entry name" value="RNAP_beta'_N"/>
    <property type="match status" value="1"/>
</dbReference>
<dbReference type="FunFam" id="1.10.132.30:FF:000003">
    <property type="entry name" value="DNA-directed RNA polymerase subunit beta"/>
    <property type="match status" value="1"/>
</dbReference>
<dbReference type="FunFam" id="1.10.150.390:FF:000002">
    <property type="entry name" value="DNA-directed RNA polymerase subunit beta"/>
    <property type="match status" value="1"/>
</dbReference>
<dbReference type="FunFam" id="4.10.860.120:FF:000001">
    <property type="entry name" value="DNA-directed RNA polymerase subunit beta"/>
    <property type="match status" value="1"/>
</dbReference>
<dbReference type="Gene3D" id="1.10.132.30">
    <property type="match status" value="1"/>
</dbReference>
<dbReference type="Gene3D" id="1.10.150.390">
    <property type="match status" value="1"/>
</dbReference>
<dbReference type="Gene3D" id="1.10.1790.20">
    <property type="match status" value="1"/>
</dbReference>
<dbReference type="Gene3D" id="1.10.40.90">
    <property type="match status" value="1"/>
</dbReference>
<dbReference type="Gene3D" id="2.40.40.20">
    <property type="match status" value="1"/>
</dbReference>
<dbReference type="Gene3D" id="2.40.50.100">
    <property type="match status" value="3"/>
</dbReference>
<dbReference type="Gene3D" id="4.10.860.120">
    <property type="entry name" value="RNA polymerase II, clamp domain"/>
    <property type="match status" value="1"/>
</dbReference>
<dbReference type="Gene3D" id="1.10.274.100">
    <property type="entry name" value="RNA polymerase Rpb1, domain 3"/>
    <property type="match status" value="1"/>
</dbReference>
<dbReference type="HAMAP" id="MF_01322">
    <property type="entry name" value="RNApol_bact_RpoC"/>
    <property type="match status" value="1"/>
</dbReference>
<dbReference type="InterPro" id="IPR045867">
    <property type="entry name" value="DNA-dir_RpoC_beta_prime"/>
</dbReference>
<dbReference type="InterPro" id="IPR012754">
    <property type="entry name" value="DNA-dir_RpoC_beta_prime_bact"/>
</dbReference>
<dbReference type="InterPro" id="IPR000722">
    <property type="entry name" value="RNA_pol_asu"/>
</dbReference>
<dbReference type="InterPro" id="IPR006592">
    <property type="entry name" value="RNA_pol_N"/>
</dbReference>
<dbReference type="InterPro" id="IPR007080">
    <property type="entry name" value="RNA_pol_Rpb1_1"/>
</dbReference>
<dbReference type="InterPro" id="IPR007066">
    <property type="entry name" value="RNA_pol_Rpb1_3"/>
</dbReference>
<dbReference type="InterPro" id="IPR042102">
    <property type="entry name" value="RNA_pol_Rpb1_3_sf"/>
</dbReference>
<dbReference type="InterPro" id="IPR007083">
    <property type="entry name" value="RNA_pol_Rpb1_4"/>
</dbReference>
<dbReference type="InterPro" id="IPR007081">
    <property type="entry name" value="RNA_pol_Rpb1_5"/>
</dbReference>
<dbReference type="InterPro" id="IPR044893">
    <property type="entry name" value="RNA_pol_Rpb1_clamp_domain"/>
</dbReference>
<dbReference type="InterPro" id="IPR038120">
    <property type="entry name" value="Rpb1_funnel_sf"/>
</dbReference>
<dbReference type="NCBIfam" id="TIGR02386">
    <property type="entry name" value="rpoC_TIGR"/>
    <property type="match status" value="1"/>
</dbReference>
<dbReference type="PANTHER" id="PTHR19376">
    <property type="entry name" value="DNA-DIRECTED RNA POLYMERASE"/>
    <property type="match status" value="1"/>
</dbReference>
<dbReference type="PANTHER" id="PTHR19376:SF54">
    <property type="entry name" value="DNA-DIRECTED RNA POLYMERASE SUBUNIT BETA"/>
    <property type="match status" value="1"/>
</dbReference>
<dbReference type="Pfam" id="PF04997">
    <property type="entry name" value="RNA_pol_Rpb1_1"/>
    <property type="match status" value="1"/>
</dbReference>
<dbReference type="Pfam" id="PF00623">
    <property type="entry name" value="RNA_pol_Rpb1_2"/>
    <property type="match status" value="1"/>
</dbReference>
<dbReference type="Pfam" id="PF04983">
    <property type="entry name" value="RNA_pol_Rpb1_3"/>
    <property type="match status" value="1"/>
</dbReference>
<dbReference type="Pfam" id="PF05000">
    <property type="entry name" value="RNA_pol_Rpb1_4"/>
    <property type="match status" value="1"/>
</dbReference>
<dbReference type="Pfam" id="PF04998">
    <property type="entry name" value="RNA_pol_Rpb1_5"/>
    <property type="match status" value="1"/>
</dbReference>
<dbReference type="SMART" id="SM00663">
    <property type="entry name" value="RPOLA_N"/>
    <property type="match status" value="1"/>
</dbReference>
<dbReference type="SUPFAM" id="SSF64484">
    <property type="entry name" value="beta and beta-prime subunits of DNA dependent RNA-polymerase"/>
    <property type="match status" value="1"/>
</dbReference>
<reference key="1">
    <citation type="journal article" date="2006" name="Nat. Biotechnol.">
        <title>Genome sequence of the bioplastic-producing 'Knallgas' bacterium Ralstonia eutropha H16.</title>
        <authorList>
            <person name="Pohlmann A."/>
            <person name="Fricke W.F."/>
            <person name="Reinecke F."/>
            <person name="Kusian B."/>
            <person name="Liesegang H."/>
            <person name="Cramm R."/>
            <person name="Eitinger T."/>
            <person name="Ewering C."/>
            <person name="Poetter M."/>
            <person name="Schwartz E."/>
            <person name="Strittmatter A."/>
            <person name="Voss I."/>
            <person name="Gottschalk G."/>
            <person name="Steinbuechel A."/>
            <person name="Friedrich B."/>
            <person name="Bowien B."/>
        </authorList>
    </citation>
    <scope>NUCLEOTIDE SEQUENCE [LARGE SCALE GENOMIC DNA]</scope>
    <source>
        <strain>ATCC 17699 / DSM 428 / KCTC 22496 / NCIMB 10442 / H16 / Stanier 337</strain>
    </source>
</reference>
<accession>Q0K607</accession>
<feature type="chain" id="PRO_0000353413" description="DNA-directed RNA polymerase subunit beta'">
    <location>
        <begin position="1"/>
        <end position="1415"/>
    </location>
</feature>
<feature type="binding site" evidence="1">
    <location>
        <position position="70"/>
    </location>
    <ligand>
        <name>Zn(2+)</name>
        <dbReference type="ChEBI" id="CHEBI:29105"/>
        <label>1</label>
    </ligand>
</feature>
<feature type="binding site" evidence="1">
    <location>
        <position position="72"/>
    </location>
    <ligand>
        <name>Zn(2+)</name>
        <dbReference type="ChEBI" id="CHEBI:29105"/>
        <label>1</label>
    </ligand>
</feature>
<feature type="binding site" evidence="1">
    <location>
        <position position="85"/>
    </location>
    <ligand>
        <name>Zn(2+)</name>
        <dbReference type="ChEBI" id="CHEBI:29105"/>
        <label>1</label>
    </ligand>
</feature>
<feature type="binding site" evidence="1">
    <location>
        <position position="88"/>
    </location>
    <ligand>
        <name>Zn(2+)</name>
        <dbReference type="ChEBI" id="CHEBI:29105"/>
        <label>1</label>
    </ligand>
</feature>
<feature type="binding site" evidence="1">
    <location>
        <position position="461"/>
    </location>
    <ligand>
        <name>Mg(2+)</name>
        <dbReference type="ChEBI" id="CHEBI:18420"/>
    </ligand>
</feature>
<feature type="binding site" evidence="1">
    <location>
        <position position="463"/>
    </location>
    <ligand>
        <name>Mg(2+)</name>
        <dbReference type="ChEBI" id="CHEBI:18420"/>
    </ligand>
</feature>
<feature type="binding site" evidence="1">
    <location>
        <position position="465"/>
    </location>
    <ligand>
        <name>Mg(2+)</name>
        <dbReference type="ChEBI" id="CHEBI:18420"/>
    </ligand>
</feature>
<feature type="binding site" evidence="1">
    <location>
        <position position="820"/>
    </location>
    <ligand>
        <name>Zn(2+)</name>
        <dbReference type="ChEBI" id="CHEBI:29105"/>
        <label>2</label>
    </ligand>
</feature>
<feature type="binding site" evidence="1">
    <location>
        <position position="894"/>
    </location>
    <ligand>
        <name>Zn(2+)</name>
        <dbReference type="ChEBI" id="CHEBI:29105"/>
        <label>2</label>
    </ligand>
</feature>
<feature type="binding site" evidence="1">
    <location>
        <position position="901"/>
    </location>
    <ligand>
        <name>Zn(2+)</name>
        <dbReference type="ChEBI" id="CHEBI:29105"/>
        <label>2</label>
    </ligand>
</feature>
<feature type="binding site" evidence="1">
    <location>
        <position position="904"/>
    </location>
    <ligand>
        <name>Zn(2+)</name>
        <dbReference type="ChEBI" id="CHEBI:29105"/>
        <label>2</label>
    </ligand>
</feature>
<name>RPOC_CUPNH</name>